<dbReference type="EC" id="1.18.6.1"/>
<dbReference type="EMBL" id="X70033">
    <property type="protein sequence ID" value="CAA49626.1"/>
    <property type="molecule type" value="Genomic_DNA"/>
</dbReference>
<dbReference type="PIR" id="S34946">
    <property type="entry name" value="S34946"/>
</dbReference>
<dbReference type="RefSeq" id="WP_013066331.1">
    <property type="nucleotide sequence ID" value="NZ_VIBE01000010.1"/>
</dbReference>
<dbReference type="SMR" id="Q07934"/>
<dbReference type="GeneID" id="31489537"/>
<dbReference type="OMA" id="CYWVDAV"/>
<dbReference type="OrthoDB" id="198407at2"/>
<dbReference type="GO" id="GO:0005524">
    <property type="term" value="F:ATP binding"/>
    <property type="evidence" value="ECO:0007669"/>
    <property type="project" value="UniProtKB-KW"/>
</dbReference>
<dbReference type="GO" id="GO:0005506">
    <property type="term" value="F:iron ion binding"/>
    <property type="evidence" value="ECO:0007669"/>
    <property type="project" value="InterPro"/>
</dbReference>
<dbReference type="GO" id="GO:0051536">
    <property type="term" value="F:iron-sulfur cluster binding"/>
    <property type="evidence" value="ECO:0007669"/>
    <property type="project" value="UniProtKB-KW"/>
</dbReference>
<dbReference type="GO" id="GO:0016163">
    <property type="term" value="F:nitrogenase activity"/>
    <property type="evidence" value="ECO:0007669"/>
    <property type="project" value="UniProtKB-EC"/>
</dbReference>
<dbReference type="GO" id="GO:0009399">
    <property type="term" value="P:nitrogen fixation"/>
    <property type="evidence" value="ECO:0007669"/>
    <property type="project" value="UniProtKB-KW"/>
</dbReference>
<dbReference type="InterPro" id="IPR014278">
    <property type="entry name" value="Nase_Fe-Fe_dsu"/>
</dbReference>
<dbReference type="InterPro" id="IPR004349">
    <property type="entry name" value="V/Nase_d_su"/>
</dbReference>
<dbReference type="NCBIfam" id="TIGR02929">
    <property type="entry name" value="anfG_nitrog"/>
    <property type="match status" value="1"/>
</dbReference>
<dbReference type="Pfam" id="PF03139">
    <property type="entry name" value="AnfG_VnfG"/>
    <property type="match status" value="1"/>
</dbReference>
<comment type="function">
    <text>The key enzymatic reactions in nitrogen fixation are catalyzed by the nitrogenase complex, which has 2 components: the iron protein (component 2) and a component 1 which is either a molybdenum-iron protein, a vanadium-iron, or an iron-iron protein.</text>
</comment>
<comment type="catalytic activity">
    <reaction>
        <text>N2 + 8 reduced [2Fe-2S]-[ferredoxin] + 16 ATP + 16 H2O = H2 + 8 oxidized [2Fe-2S]-[ferredoxin] + 2 NH4(+) + 16 ADP + 16 phosphate + 6 H(+)</text>
        <dbReference type="Rhea" id="RHEA:21448"/>
        <dbReference type="Rhea" id="RHEA-COMP:10000"/>
        <dbReference type="Rhea" id="RHEA-COMP:10001"/>
        <dbReference type="ChEBI" id="CHEBI:15377"/>
        <dbReference type="ChEBI" id="CHEBI:15378"/>
        <dbReference type="ChEBI" id="CHEBI:17997"/>
        <dbReference type="ChEBI" id="CHEBI:18276"/>
        <dbReference type="ChEBI" id="CHEBI:28938"/>
        <dbReference type="ChEBI" id="CHEBI:30616"/>
        <dbReference type="ChEBI" id="CHEBI:33737"/>
        <dbReference type="ChEBI" id="CHEBI:33738"/>
        <dbReference type="ChEBI" id="CHEBI:43474"/>
        <dbReference type="ChEBI" id="CHEBI:456216"/>
        <dbReference type="EC" id="1.18.6.1"/>
    </reaction>
</comment>
<comment type="cofactor">
    <cofactor>
        <name>iron-sulfur cluster</name>
        <dbReference type="ChEBI" id="CHEBI:30408"/>
    </cofactor>
</comment>
<comment type="subunit">
    <text>Hexamer of two alpha, two beta, and two delta chains.</text>
</comment>
<keyword id="KW-0067">ATP-binding</keyword>
<keyword id="KW-0408">Iron</keyword>
<keyword id="KW-0411">Iron-sulfur</keyword>
<keyword id="KW-0479">Metal-binding</keyword>
<keyword id="KW-0535">Nitrogen fixation</keyword>
<keyword id="KW-0547">Nucleotide-binding</keyword>
<keyword id="KW-0560">Oxidoreductase</keyword>
<protein>
    <recommendedName>
        <fullName>Nitrogenase iron-iron protein delta chain</fullName>
        <ecNumber>1.18.6.1</ecNumber>
    </recommendedName>
    <alternativeName>
        <fullName>Dinitrogenase 3 subunit delta</fullName>
    </alternativeName>
    <alternativeName>
        <fullName>Nitrogenase component I</fullName>
    </alternativeName>
</protein>
<gene>
    <name type="primary">anfG</name>
</gene>
<sequence>MTDISEKLDPLVDYIMKNCLWQFNSRGWDRLKQNAGILSQTCEILCGEEPVHETAMDRCYWVDAVILSRAYKARFPWLMAMTKPEIKSLFKALHEKIDHLTVHGSLNTELTVPHY</sequence>
<feature type="chain" id="PRO_0000213567" description="Nitrogenase iron-iron protein delta chain">
    <location>
        <begin position="1"/>
        <end position="115"/>
    </location>
</feature>
<accession>Q07934</accession>
<organism>
    <name type="scientific">Rhodobacter capsulatus</name>
    <name type="common">Rhodopseudomonas capsulata</name>
    <dbReference type="NCBI Taxonomy" id="1061"/>
    <lineage>
        <taxon>Bacteria</taxon>
        <taxon>Pseudomonadati</taxon>
        <taxon>Pseudomonadota</taxon>
        <taxon>Alphaproteobacteria</taxon>
        <taxon>Rhodobacterales</taxon>
        <taxon>Rhodobacter group</taxon>
        <taxon>Rhodobacter</taxon>
    </lineage>
</organism>
<proteinExistence type="predicted"/>
<reference key="1">
    <citation type="journal article" date="1993" name="Mol. Microbiol.">
        <title>Characterization of anf genes specific for the alternative nitrogenase and identification of nif genes required for both nitrogenases in Rhodobacter capsulatus.</title>
        <authorList>
            <person name="Schueddekopf K."/>
            <person name="Hennecke S."/>
            <person name="Liese U."/>
            <person name="Kutsche M."/>
            <person name="Klipp W."/>
        </authorList>
    </citation>
    <scope>NUCLEOTIDE SEQUENCE [GENOMIC DNA]</scope>
    <source>
        <strain>B10S</strain>
    </source>
</reference>
<name>ANFG_RHOCA</name>